<proteinExistence type="inferred from homology"/>
<comment type="function">
    <text evidence="1">Transcriptional regulator.</text>
</comment>
<comment type="cofactor">
    <cofactor evidence="1">
        <name>Ni(2+)</name>
        <dbReference type="ChEBI" id="CHEBI:49786"/>
    </cofactor>
    <text evidence="1">Binds 1 nickel ion per subunit.</text>
</comment>
<comment type="similarity">
    <text evidence="1">Belongs to the transcriptional regulatory CopG/NikR family.</text>
</comment>
<dbReference type="EMBL" id="CP000473">
    <property type="protein sequence ID" value="ABJ87634.1"/>
    <property type="molecule type" value="Genomic_DNA"/>
</dbReference>
<dbReference type="SMR" id="Q01RT6"/>
<dbReference type="FunCoup" id="Q01RT6">
    <property type="interactions" value="39"/>
</dbReference>
<dbReference type="STRING" id="234267.Acid_6713"/>
<dbReference type="KEGG" id="sus:Acid_6713"/>
<dbReference type="eggNOG" id="COG0864">
    <property type="taxonomic scope" value="Bacteria"/>
</dbReference>
<dbReference type="HOGENOM" id="CLU_113319_1_2_0"/>
<dbReference type="InParanoid" id="Q01RT6"/>
<dbReference type="OrthoDB" id="9806294at2"/>
<dbReference type="GO" id="GO:0003677">
    <property type="term" value="F:DNA binding"/>
    <property type="evidence" value="ECO:0007669"/>
    <property type="project" value="UniProtKB-KW"/>
</dbReference>
<dbReference type="GO" id="GO:0003700">
    <property type="term" value="F:DNA-binding transcription factor activity"/>
    <property type="evidence" value="ECO:0007669"/>
    <property type="project" value="UniProtKB-UniRule"/>
</dbReference>
<dbReference type="GO" id="GO:0016151">
    <property type="term" value="F:nickel cation binding"/>
    <property type="evidence" value="ECO:0007669"/>
    <property type="project" value="UniProtKB-UniRule"/>
</dbReference>
<dbReference type="GO" id="GO:0010045">
    <property type="term" value="P:response to nickel cation"/>
    <property type="evidence" value="ECO:0007669"/>
    <property type="project" value="InterPro"/>
</dbReference>
<dbReference type="CDD" id="cd22231">
    <property type="entry name" value="RHH_NikR_HicB-like"/>
    <property type="match status" value="1"/>
</dbReference>
<dbReference type="Gene3D" id="3.30.70.1150">
    <property type="entry name" value="ACT-like. Chain A, domain 2"/>
    <property type="match status" value="1"/>
</dbReference>
<dbReference type="Gene3D" id="1.10.1220.10">
    <property type="entry name" value="Met repressor-like"/>
    <property type="match status" value="1"/>
</dbReference>
<dbReference type="HAMAP" id="MF_00476">
    <property type="entry name" value="NikR"/>
    <property type="match status" value="1"/>
</dbReference>
<dbReference type="InterPro" id="IPR027271">
    <property type="entry name" value="Acetolactate_synth/TF_NikR_C"/>
</dbReference>
<dbReference type="InterPro" id="IPR045865">
    <property type="entry name" value="ACT-like_dom_sf"/>
</dbReference>
<dbReference type="InterPro" id="IPR013321">
    <property type="entry name" value="Arc_rbn_hlx_hlx"/>
</dbReference>
<dbReference type="InterPro" id="IPR002145">
    <property type="entry name" value="CopG"/>
</dbReference>
<dbReference type="InterPro" id="IPR050192">
    <property type="entry name" value="CopG/NikR_regulator"/>
</dbReference>
<dbReference type="InterPro" id="IPR022988">
    <property type="entry name" value="Ni_resp_reg_NikR"/>
</dbReference>
<dbReference type="InterPro" id="IPR010985">
    <property type="entry name" value="Ribbon_hlx_hlx"/>
</dbReference>
<dbReference type="InterPro" id="IPR014864">
    <property type="entry name" value="TF_NikR_Ni-bd_C"/>
</dbReference>
<dbReference type="NCBIfam" id="NF001884">
    <property type="entry name" value="PRK00630.1"/>
    <property type="match status" value="1"/>
</dbReference>
<dbReference type="NCBIfam" id="NF002169">
    <property type="entry name" value="PRK01002.1"/>
    <property type="match status" value="1"/>
</dbReference>
<dbReference type="NCBIfam" id="NF002815">
    <property type="entry name" value="PRK02967.1"/>
    <property type="match status" value="1"/>
</dbReference>
<dbReference type="NCBIfam" id="NF003381">
    <property type="entry name" value="PRK04460.1"/>
    <property type="match status" value="1"/>
</dbReference>
<dbReference type="PANTHER" id="PTHR34719">
    <property type="entry name" value="NICKEL-RESPONSIVE REGULATOR"/>
    <property type="match status" value="1"/>
</dbReference>
<dbReference type="PANTHER" id="PTHR34719:SF2">
    <property type="entry name" value="NICKEL-RESPONSIVE REGULATOR"/>
    <property type="match status" value="1"/>
</dbReference>
<dbReference type="Pfam" id="PF08753">
    <property type="entry name" value="NikR_C"/>
    <property type="match status" value="1"/>
</dbReference>
<dbReference type="Pfam" id="PF01402">
    <property type="entry name" value="RHH_1"/>
    <property type="match status" value="1"/>
</dbReference>
<dbReference type="SUPFAM" id="SSF55021">
    <property type="entry name" value="ACT-like"/>
    <property type="match status" value="1"/>
</dbReference>
<dbReference type="SUPFAM" id="SSF47598">
    <property type="entry name" value="Ribbon-helix-helix"/>
    <property type="match status" value="1"/>
</dbReference>
<accession>Q01RT6</accession>
<evidence type="ECO:0000255" key="1">
    <source>
        <dbReference type="HAMAP-Rule" id="MF_00476"/>
    </source>
</evidence>
<reference key="1">
    <citation type="journal article" date="2009" name="Appl. Environ. Microbiol.">
        <title>Three genomes from the phylum Acidobacteria provide insight into the lifestyles of these microorganisms in soils.</title>
        <authorList>
            <person name="Ward N.L."/>
            <person name="Challacombe J.F."/>
            <person name="Janssen P.H."/>
            <person name="Henrissat B."/>
            <person name="Coutinho P.M."/>
            <person name="Wu M."/>
            <person name="Xie G."/>
            <person name="Haft D.H."/>
            <person name="Sait M."/>
            <person name="Badger J."/>
            <person name="Barabote R.D."/>
            <person name="Bradley B."/>
            <person name="Brettin T.S."/>
            <person name="Brinkac L.M."/>
            <person name="Bruce D."/>
            <person name="Creasy T."/>
            <person name="Daugherty S.C."/>
            <person name="Davidsen T.M."/>
            <person name="DeBoy R.T."/>
            <person name="Detter J.C."/>
            <person name="Dodson R.J."/>
            <person name="Durkin A.S."/>
            <person name="Ganapathy A."/>
            <person name="Gwinn-Giglio M."/>
            <person name="Han C.S."/>
            <person name="Khouri H."/>
            <person name="Kiss H."/>
            <person name="Kothari S.P."/>
            <person name="Madupu R."/>
            <person name="Nelson K.E."/>
            <person name="Nelson W.C."/>
            <person name="Paulsen I."/>
            <person name="Penn K."/>
            <person name="Ren Q."/>
            <person name="Rosovitz M.J."/>
            <person name="Selengut J.D."/>
            <person name="Shrivastava S."/>
            <person name="Sullivan S.A."/>
            <person name="Tapia R."/>
            <person name="Thompson L.S."/>
            <person name="Watkins K.L."/>
            <person name="Yang Q."/>
            <person name="Yu C."/>
            <person name="Zafar N."/>
            <person name="Zhou L."/>
            <person name="Kuske C.R."/>
        </authorList>
    </citation>
    <scope>NUCLEOTIDE SEQUENCE [LARGE SCALE GENOMIC DNA]</scope>
    <source>
        <strain>Ellin6076</strain>
    </source>
</reference>
<protein>
    <recommendedName>
        <fullName evidence="1">Putative nickel-responsive regulator</fullName>
    </recommendedName>
</protein>
<organism>
    <name type="scientific">Solibacter usitatus (strain Ellin6076)</name>
    <dbReference type="NCBI Taxonomy" id="234267"/>
    <lineage>
        <taxon>Bacteria</taxon>
        <taxon>Pseudomonadati</taxon>
        <taxon>Acidobacteriota</taxon>
        <taxon>Terriglobia</taxon>
        <taxon>Bryobacterales</taxon>
        <taxon>Solibacteraceae</taxon>
        <taxon>Candidatus Solibacter</taxon>
    </lineage>
</organism>
<feature type="chain" id="PRO_1000014083" description="Putative nickel-responsive regulator">
    <location>
        <begin position="1"/>
        <end position="139"/>
    </location>
</feature>
<feature type="binding site" evidence="1">
    <location>
        <position position="79"/>
    </location>
    <ligand>
        <name>Ni(2+)</name>
        <dbReference type="ChEBI" id="CHEBI:49786"/>
    </ligand>
</feature>
<feature type="binding site" evidence="1">
    <location>
        <position position="90"/>
    </location>
    <ligand>
        <name>Ni(2+)</name>
        <dbReference type="ChEBI" id="CHEBI:49786"/>
    </ligand>
</feature>
<feature type="binding site" evidence="1">
    <location>
        <position position="92"/>
    </location>
    <ligand>
        <name>Ni(2+)</name>
        <dbReference type="ChEBI" id="CHEBI:49786"/>
    </ligand>
</feature>
<feature type="binding site" evidence="1">
    <location>
        <position position="98"/>
    </location>
    <ligand>
        <name>Ni(2+)</name>
        <dbReference type="ChEBI" id="CHEBI:49786"/>
    </ligand>
</feature>
<sequence>MSGLSRIGVAIDSDLLDKFDSLIGQRGYTNRSEAFRDLIRDELVEKTWESPESQVVGTVTLVYDHHVRLLNEKLTGIQHDFHHSILSTLHVHLDHDNCLEVLVVRGRSADVRKVADVLISTKGVKHGRLTITTTGAEMK</sequence>
<name>NIKR_SOLUE</name>
<gene>
    <name type="ordered locus">Acid_6713</name>
</gene>
<keyword id="KW-0238">DNA-binding</keyword>
<keyword id="KW-0479">Metal-binding</keyword>
<keyword id="KW-0533">Nickel</keyword>
<keyword id="KW-0804">Transcription</keyword>
<keyword id="KW-0805">Transcription regulation</keyword>